<protein>
    <recommendedName>
        <fullName evidence="1">2-isopropylmalate synthase</fullName>
        <ecNumber evidence="1">2.3.3.13</ecNumber>
    </recommendedName>
    <alternativeName>
        <fullName evidence="1">Alpha-IPM synthase</fullName>
    </alternativeName>
    <alternativeName>
        <fullName evidence="1">Alpha-isopropylmalate synthase</fullName>
    </alternativeName>
</protein>
<sequence length="557" mass="61725">MTMLKDPSKKYRAFPTIELPDRTWPSKTITEAPIWCSSDLRDGNQSLIEPMDSEKKLRFWKTLVQVGVKEIEASFPSASQTDFDFVRTLIEDGHIPDDTTIQVLTQAREDLIARTFESLRGAKKAIVHLYNATSPSFRRIVFNQDKQGVKDIAVNAAKLFVKYAAQQPETQWTFQYSPETFSATELEFAKEVCDAVIEVWNPTPEHKVILNLPATVEVATPNIYADQIEWFCRNISRRDSVIISLHCHNDRGTGIAATELGLMAGADRAEGCLFGNGERTGNVDLVTLALNLYTQGIDPQLDFSDIDGVRKVVEECNQLPVHPRHPYVGDLVHTAFSGSHQDAIRKGFAKQQDGELWEVPYLPIDPADIGRSYEAVIRVNSQSGKGGITYLLEQEYGISLPRRMQIEFSQVVQGETDRLGLEMTAQQIYSLLHKEYLQANSPYALVSHRLQEENGHSAVEVEVAGEGETTLHWRGKGNGALEALVAGLPIAVEIMDYNEHAIGAGTNAKAAAYIELRVAGGRPVHGVGIDENITTASFKALFSALNRSLSQQEAKAA</sequence>
<proteinExistence type="inferred from homology"/>
<dbReference type="EC" id="2.3.3.13" evidence="1"/>
<dbReference type="EMBL" id="CP000949">
    <property type="protein sequence ID" value="ACA74679.1"/>
    <property type="molecule type" value="Genomic_DNA"/>
</dbReference>
<dbReference type="SMR" id="B1JDI2"/>
<dbReference type="STRING" id="390235.PputW619_4199"/>
<dbReference type="KEGG" id="ppw:PputW619_4199"/>
<dbReference type="eggNOG" id="COG0119">
    <property type="taxonomic scope" value="Bacteria"/>
</dbReference>
<dbReference type="HOGENOM" id="CLU_004588_3_0_6"/>
<dbReference type="OrthoDB" id="9803573at2"/>
<dbReference type="UniPathway" id="UPA00048">
    <property type="reaction ID" value="UER00070"/>
</dbReference>
<dbReference type="GO" id="GO:0005737">
    <property type="term" value="C:cytoplasm"/>
    <property type="evidence" value="ECO:0007669"/>
    <property type="project" value="UniProtKB-SubCell"/>
</dbReference>
<dbReference type="GO" id="GO:0003852">
    <property type="term" value="F:2-isopropylmalate synthase activity"/>
    <property type="evidence" value="ECO:0007669"/>
    <property type="project" value="UniProtKB-UniRule"/>
</dbReference>
<dbReference type="GO" id="GO:0003985">
    <property type="term" value="F:acetyl-CoA C-acetyltransferase activity"/>
    <property type="evidence" value="ECO:0007669"/>
    <property type="project" value="UniProtKB-UniRule"/>
</dbReference>
<dbReference type="GO" id="GO:0000287">
    <property type="term" value="F:magnesium ion binding"/>
    <property type="evidence" value="ECO:0007669"/>
    <property type="project" value="UniProtKB-UniRule"/>
</dbReference>
<dbReference type="GO" id="GO:0009098">
    <property type="term" value="P:L-leucine biosynthetic process"/>
    <property type="evidence" value="ECO:0007669"/>
    <property type="project" value="UniProtKB-UniRule"/>
</dbReference>
<dbReference type="CDD" id="cd07942">
    <property type="entry name" value="DRE_TIM_LeuA"/>
    <property type="match status" value="1"/>
</dbReference>
<dbReference type="FunFam" id="3.20.20.70:FF:000045">
    <property type="entry name" value="2-isopropylmalate synthase"/>
    <property type="match status" value="1"/>
</dbReference>
<dbReference type="Gene3D" id="3.30.160.270">
    <property type="match status" value="1"/>
</dbReference>
<dbReference type="Gene3D" id="3.20.20.70">
    <property type="entry name" value="Aldolase class I"/>
    <property type="match status" value="1"/>
</dbReference>
<dbReference type="HAMAP" id="MF_00572">
    <property type="entry name" value="LeuA_type2"/>
    <property type="match status" value="1"/>
</dbReference>
<dbReference type="InterPro" id="IPR013709">
    <property type="entry name" value="2-isopropylmalate_synth_dimer"/>
</dbReference>
<dbReference type="InterPro" id="IPR002034">
    <property type="entry name" value="AIPM/Hcit_synth_CS"/>
</dbReference>
<dbReference type="InterPro" id="IPR013785">
    <property type="entry name" value="Aldolase_TIM"/>
</dbReference>
<dbReference type="InterPro" id="IPR005668">
    <property type="entry name" value="IPM_Synthase"/>
</dbReference>
<dbReference type="InterPro" id="IPR054692">
    <property type="entry name" value="LeuA-like_post-cat"/>
</dbReference>
<dbReference type="InterPro" id="IPR036230">
    <property type="entry name" value="LeuA_allosteric_dom_sf"/>
</dbReference>
<dbReference type="InterPro" id="IPR039371">
    <property type="entry name" value="LeuA_N_DRE-TIM"/>
</dbReference>
<dbReference type="InterPro" id="IPR000891">
    <property type="entry name" value="PYR_CT"/>
</dbReference>
<dbReference type="NCBIfam" id="TIGR00970">
    <property type="entry name" value="leuA_yeast"/>
    <property type="match status" value="1"/>
</dbReference>
<dbReference type="NCBIfam" id="NF002991">
    <property type="entry name" value="PRK03739.1"/>
    <property type="match status" value="1"/>
</dbReference>
<dbReference type="PANTHER" id="PTHR46911">
    <property type="match status" value="1"/>
</dbReference>
<dbReference type="PANTHER" id="PTHR46911:SF1">
    <property type="entry name" value="2-ISOPROPYLMALATE SYNTHASE"/>
    <property type="match status" value="1"/>
</dbReference>
<dbReference type="Pfam" id="PF00682">
    <property type="entry name" value="HMGL-like"/>
    <property type="match status" value="1"/>
</dbReference>
<dbReference type="Pfam" id="PF22615">
    <property type="entry name" value="IPMS_D2"/>
    <property type="match status" value="1"/>
</dbReference>
<dbReference type="Pfam" id="PF08502">
    <property type="entry name" value="LeuA_dimer"/>
    <property type="match status" value="1"/>
</dbReference>
<dbReference type="SMART" id="SM00917">
    <property type="entry name" value="LeuA_dimer"/>
    <property type="match status" value="1"/>
</dbReference>
<dbReference type="SUPFAM" id="SSF110921">
    <property type="entry name" value="2-isopropylmalate synthase LeuA, allosteric (dimerisation) domain"/>
    <property type="match status" value="1"/>
</dbReference>
<dbReference type="SUPFAM" id="SSF51569">
    <property type="entry name" value="Aldolase"/>
    <property type="match status" value="1"/>
</dbReference>
<dbReference type="SUPFAM" id="SSF89000">
    <property type="entry name" value="post-HMGL domain-like"/>
    <property type="match status" value="1"/>
</dbReference>
<dbReference type="PROSITE" id="PS00815">
    <property type="entry name" value="AIPM_HOMOCIT_SYNTH_1"/>
    <property type="match status" value="1"/>
</dbReference>
<dbReference type="PROSITE" id="PS00816">
    <property type="entry name" value="AIPM_HOMOCIT_SYNTH_2"/>
    <property type="match status" value="1"/>
</dbReference>
<dbReference type="PROSITE" id="PS50991">
    <property type="entry name" value="PYR_CT"/>
    <property type="match status" value="1"/>
</dbReference>
<organism>
    <name type="scientific">Pseudomonas putida (strain W619)</name>
    <dbReference type="NCBI Taxonomy" id="390235"/>
    <lineage>
        <taxon>Bacteria</taxon>
        <taxon>Pseudomonadati</taxon>
        <taxon>Pseudomonadota</taxon>
        <taxon>Gammaproteobacteria</taxon>
        <taxon>Pseudomonadales</taxon>
        <taxon>Pseudomonadaceae</taxon>
        <taxon>Pseudomonas</taxon>
    </lineage>
</organism>
<accession>B1JDI2</accession>
<evidence type="ECO:0000255" key="1">
    <source>
        <dbReference type="HAMAP-Rule" id="MF_00572"/>
    </source>
</evidence>
<reference key="1">
    <citation type="submission" date="2008-02" db="EMBL/GenBank/DDBJ databases">
        <title>Complete sequence of Pseudomonas putida W619.</title>
        <authorList>
            <person name="Copeland A."/>
            <person name="Lucas S."/>
            <person name="Lapidus A."/>
            <person name="Barry K."/>
            <person name="Detter J.C."/>
            <person name="Glavina del Rio T."/>
            <person name="Dalin E."/>
            <person name="Tice H."/>
            <person name="Pitluck S."/>
            <person name="Chain P."/>
            <person name="Malfatti S."/>
            <person name="Shin M."/>
            <person name="Vergez L."/>
            <person name="Schmutz J."/>
            <person name="Larimer F."/>
            <person name="Land M."/>
            <person name="Hauser L."/>
            <person name="Kyrpides N."/>
            <person name="Kim E."/>
            <person name="Taghavi S."/>
            <person name="Vangronsveld D."/>
            <person name="van der Lelie D."/>
            <person name="Richardson P."/>
        </authorList>
    </citation>
    <scope>NUCLEOTIDE SEQUENCE [LARGE SCALE GENOMIC DNA]</scope>
    <source>
        <strain>W619</strain>
    </source>
</reference>
<feature type="chain" id="PRO_1000129509" description="2-isopropylmalate synthase">
    <location>
        <begin position="1"/>
        <end position="557"/>
    </location>
</feature>
<feature type="domain" description="Pyruvate carboxyltransferase" evidence="1">
    <location>
        <begin position="33"/>
        <end position="307"/>
    </location>
</feature>
<feature type="region of interest" description="Regulatory domain" evidence="1">
    <location>
        <begin position="439"/>
        <end position="557"/>
    </location>
</feature>
<feature type="binding site" evidence="1">
    <location>
        <position position="42"/>
    </location>
    <ligand>
        <name>Mg(2+)</name>
        <dbReference type="ChEBI" id="CHEBI:18420"/>
    </ligand>
</feature>
<feature type="binding site" evidence="1">
    <location>
        <position position="246"/>
    </location>
    <ligand>
        <name>Mg(2+)</name>
        <dbReference type="ChEBI" id="CHEBI:18420"/>
    </ligand>
</feature>
<feature type="binding site" evidence="1">
    <location>
        <position position="248"/>
    </location>
    <ligand>
        <name>Mg(2+)</name>
        <dbReference type="ChEBI" id="CHEBI:18420"/>
    </ligand>
</feature>
<feature type="binding site" evidence="1">
    <location>
        <position position="282"/>
    </location>
    <ligand>
        <name>Mg(2+)</name>
        <dbReference type="ChEBI" id="CHEBI:18420"/>
    </ligand>
</feature>
<name>LEU1_PSEPW</name>
<gene>
    <name evidence="1" type="primary">leuA</name>
    <name type="ordered locus">PputW619_4199</name>
</gene>
<comment type="function">
    <text evidence="1">Catalyzes the condensation of the acetyl group of acetyl-CoA with 3-methyl-2-oxobutanoate (2-ketoisovalerate) to form 3-carboxy-3-hydroxy-4-methylpentanoate (2-isopropylmalate).</text>
</comment>
<comment type="catalytic activity">
    <reaction evidence="1">
        <text>3-methyl-2-oxobutanoate + acetyl-CoA + H2O = (2S)-2-isopropylmalate + CoA + H(+)</text>
        <dbReference type="Rhea" id="RHEA:21524"/>
        <dbReference type="ChEBI" id="CHEBI:1178"/>
        <dbReference type="ChEBI" id="CHEBI:11851"/>
        <dbReference type="ChEBI" id="CHEBI:15377"/>
        <dbReference type="ChEBI" id="CHEBI:15378"/>
        <dbReference type="ChEBI" id="CHEBI:57287"/>
        <dbReference type="ChEBI" id="CHEBI:57288"/>
        <dbReference type="EC" id="2.3.3.13"/>
    </reaction>
</comment>
<comment type="cofactor">
    <cofactor evidence="1">
        <name>Mg(2+)</name>
        <dbReference type="ChEBI" id="CHEBI:18420"/>
    </cofactor>
</comment>
<comment type="pathway">
    <text evidence="1">Amino-acid biosynthesis; L-leucine biosynthesis; L-leucine from 3-methyl-2-oxobutanoate: step 1/4.</text>
</comment>
<comment type="subunit">
    <text evidence="1">Homodimer.</text>
</comment>
<comment type="subcellular location">
    <subcellularLocation>
        <location evidence="1">Cytoplasm</location>
    </subcellularLocation>
</comment>
<comment type="similarity">
    <text evidence="1">Belongs to the alpha-IPM synthase/homocitrate synthase family. LeuA type 2 subfamily.</text>
</comment>
<keyword id="KW-0028">Amino-acid biosynthesis</keyword>
<keyword id="KW-0100">Branched-chain amino acid biosynthesis</keyword>
<keyword id="KW-0963">Cytoplasm</keyword>
<keyword id="KW-0432">Leucine biosynthesis</keyword>
<keyword id="KW-0460">Magnesium</keyword>
<keyword id="KW-0479">Metal-binding</keyword>
<keyword id="KW-0808">Transferase</keyword>